<dbReference type="EC" id="2.7.7.60" evidence="1"/>
<dbReference type="EC" id="4.6.1.12" evidence="1"/>
<dbReference type="EMBL" id="AE017285">
    <property type="protein sequence ID" value="AAS95932.1"/>
    <property type="molecule type" value="Genomic_DNA"/>
</dbReference>
<dbReference type="RefSeq" id="WP_010938747.1">
    <property type="nucleotide sequence ID" value="NC_002937.3"/>
</dbReference>
<dbReference type="RefSeq" id="YP_010673.1">
    <property type="nucleotide sequence ID" value="NC_002937.3"/>
</dbReference>
<dbReference type="SMR" id="Q72C30"/>
<dbReference type="IntAct" id="Q72C30">
    <property type="interactions" value="4"/>
</dbReference>
<dbReference type="STRING" id="882.DVU_1454"/>
<dbReference type="PaxDb" id="882-DVU_1454"/>
<dbReference type="EnsemblBacteria" id="AAS95932">
    <property type="protein sequence ID" value="AAS95932"/>
    <property type="gene ID" value="DVU_1454"/>
</dbReference>
<dbReference type="KEGG" id="dvu:DVU_1454"/>
<dbReference type="PATRIC" id="fig|882.5.peg.1353"/>
<dbReference type="eggNOG" id="COG0245">
    <property type="taxonomic scope" value="Bacteria"/>
</dbReference>
<dbReference type="eggNOG" id="COG1211">
    <property type="taxonomic scope" value="Bacteria"/>
</dbReference>
<dbReference type="HOGENOM" id="CLU_042800_1_0_7"/>
<dbReference type="OrthoDB" id="9804336at2"/>
<dbReference type="PhylomeDB" id="Q72C30"/>
<dbReference type="UniPathway" id="UPA00056">
    <property type="reaction ID" value="UER00093"/>
</dbReference>
<dbReference type="UniPathway" id="UPA00056">
    <property type="reaction ID" value="UER00095"/>
</dbReference>
<dbReference type="Proteomes" id="UP000002194">
    <property type="component" value="Chromosome"/>
</dbReference>
<dbReference type="GO" id="GO:0008685">
    <property type="term" value="F:2-C-methyl-D-erythritol 2,4-cyclodiphosphate synthase activity"/>
    <property type="evidence" value="ECO:0007669"/>
    <property type="project" value="UniProtKB-UniRule"/>
</dbReference>
<dbReference type="GO" id="GO:0050518">
    <property type="term" value="F:2-C-methyl-D-erythritol 4-phosphate cytidylyltransferase activity"/>
    <property type="evidence" value="ECO:0007669"/>
    <property type="project" value="UniProtKB-UniRule"/>
</dbReference>
<dbReference type="GO" id="GO:0046872">
    <property type="term" value="F:metal ion binding"/>
    <property type="evidence" value="ECO:0007669"/>
    <property type="project" value="UniProtKB-KW"/>
</dbReference>
<dbReference type="GO" id="GO:0019288">
    <property type="term" value="P:isopentenyl diphosphate biosynthetic process, methylerythritol 4-phosphate pathway"/>
    <property type="evidence" value="ECO:0007669"/>
    <property type="project" value="UniProtKB-UniRule"/>
</dbReference>
<dbReference type="GO" id="GO:0016114">
    <property type="term" value="P:terpenoid biosynthetic process"/>
    <property type="evidence" value="ECO:0007669"/>
    <property type="project" value="InterPro"/>
</dbReference>
<dbReference type="CDD" id="cd02516">
    <property type="entry name" value="CDP-ME_synthetase"/>
    <property type="match status" value="1"/>
</dbReference>
<dbReference type="CDD" id="cd00554">
    <property type="entry name" value="MECDP_synthase"/>
    <property type="match status" value="1"/>
</dbReference>
<dbReference type="FunFam" id="3.90.550.10:FF:000003">
    <property type="entry name" value="2-C-methyl-D-erythritol 4-phosphate cytidylyltransferase"/>
    <property type="match status" value="1"/>
</dbReference>
<dbReference type="Gene3D" id="3.30.1330.50">
    <property type="entry name" value="2-C-methyl-D-erythritol 2,4-cyclodiphosphate synthase"/>
    <property type="match status" value="1"/>
</dbReference>
<dbReference type="Gene3D" id="3.90.550.10">
    <property type="entry name" value="Spore Coat Polysaccharide Biosynthesis Protein SpsA, Chain A"/>
    <property type="match status" value="1"/>
</dbReference>
<dbReference type="HAMAP" id="MF_00108">
    <property type="entry name" value="IspD"/>
    <property type="match status" value="1"/>
</dbReference>
<dbReference type="HAMAP" id="MF_01520">
    <property type="entry name" value="IspDF"/>
    <property type="match status" value="1"/>
</dbReference>
<dbReference type="HAMAP" id="MF_00107">
    <property type="entry name" value="IspF"/>
    <property type="match status" value="1"/>
</dbReference>
<dbReference type="InterPro" id="IPR001228">
    <property type="entry name" value="IspD"/>
</dbReference>
<dbReference type="InterPro" id="IPR026596">
    <property type="entry name" value="IspD/F"/>
</dbReference>
<dbReference type="InterPro" id="IPR034683">
    <property type="entry name" value="IspD/TarI"/>
</dbReference>
<dbReference type="InterPro" id="IPR018294">
    <property type="entry name" value="ISPD_synthase_CS"/>
</dbReference>
<dbReference type="InterPro" id="IPR003526">
    <property type="entry name" value="MECDP_synthase"/>
</dbReference>
<dbReference type="InterPro" id="IPR020555">
    <property type="entry name" value="MECDP_synthase_CS"/>
</dbReference>
<dbReference type="InterPro" id="IPR036571">
    <property type="entry name" value="MECDP_synthase_sf"/>
</dbReference>
<dbReference type="InterPro" id="IPR029044">
    <property type="entry name" value="Nucleotide-diphossugar_trans"/>
</dbReference>
<dbReference type="NCBIfam" id="TIGR00453">
    <property type="entry name" value="ispD"/>
    <property type="match status" value="1"/>
</dbReference>
<dbReference type="NCBIfam" id="TIGR00151">
    <property type="entry name" value="ispF"/>
    <property type="match status" value="1"/>
</dbReference>
<dbReference type="PANTHER" id="PTHR43181">
    <property type="entry name" value="2-C-METHYL-D-ERYTHRITOL 2,4-CYCLODIPHOSPHATE SYNTHASE, CHLOROPLASTIC"/>
    <property type="match status" value="1"/>
</dbReference>
<dbReference type="PANTHER" id="PTHR43181:SF1">
    <property type="entry name" value="2-C-METHYL-D-ERYTHRITOL 2,4-CYCLODIPHOSPHATE SYNTHASE, CHLOROPLASTIC"/>
    <property type="match status" value="1"/>
</dbReference>
<dbReference type="Pfam" id="PF01128">
    <property type="entry name" value="IspD"/>
    <property type="match status" value="1"/>
</dbReference>
<dbReference type="Pfam" id="PF02542">
    <property type="entry name" value="YgbB"/>
    <property type="match status" value="1"/>
</dbReference>
<dbReference type="SUPFAM" id="SSF69765">
    <property type="entry name" value="IpsF-like"/>
    <property type="match status" value="1"/>
</dbReference>
<dbReference type="SUPFAM" id="SSF53448">
    <property type="entry name" value="Nucleotide-diphospho-sugar transferases"/>
    <property type="match status" value="1"/>
</dbReference>
<dbReference type="PROSITE" id="PS01295">
    <property type="entry name" value="ISPD"/>
    <property type="match status" value="1"/>
</dbReference>
<dbReference type="PROSITE" id="PS01350">
    <property type="entry name" value="ISPF"/>
    <property type="match status" value="1"/>
</dbReference>
<protein>
    <recommendedName>
        <fullName evidence="1">Bifunctional enzyme IspD/IspF</fullName>
    </recommendedName>
    <domain>
        <recommendedName>
            <fullName evidence="1">2-C-methyl-D-erythritol 4-phosphate cytidylyltransferase</fullName>
            <ecNumber evidence="1">2.7.7.60</ecNumber>
        </recommendedName>
        <alternativeName>
            <fullName evidence="1">4-diphosphocytidyl-2C-methyl-D-erythritol synthase</fullName>
        </alternativeName>
        <alternativeName>
            <fullName evidence="1">MEP cytidylyltransferase</fullName>
            <shortName evidence="1">MCT</shortName>
        </alternativeName>
    </domain>
    <domain>
        <recommendedName>
            <fullName evidence="1">2-C-methyl-D-erythritol 2,4-cyclodiphosphate synthase</fullName>
            <shortName evidence="1">MECDP-synthase</shortName>
            <shortName evidence="1">MECPP-synthase</shortName>
            <shortName evidence="1">MECPS</shortName>
            <ecNumber evidence="1">4.6.1.12</ecNumber>
        </recommendedName>
    </domain>
</protein>
<name>ISPDF_NITV2</name>
<accession>Q72C30</accession>
<sequence>MRTWVLLLAAGSGTRLATAGLPDAKQFLPLHGAPLYWASARTMAHVAGIEGIVFVFPPHRVEEERARISALDDGSVLGLDWHVVGGGAARQDSVACGLAALPRSCEAVLVHDAARPFASPALVARVLSALHDGHAGVVPGIPLTDTVKETTDGFVANTPDRSRLVAVQTPQGFTLKALSTAHETARTAGWNVTDDAALLERCGIPVRIVAGEVVNAKITTPEDLAMLDANEPQVTVPCVGWGYDVHRYGEGRPMKLGGVLIPEGPEVVAHSDGDVLLHALADALLGCIGAGDIGLHFPDSDAAFDNANSAMLLDRVLHMTHEARLRLTHVDLTIVAQVPKLSPWRDKIRANVARLLDLPVTSVNFKATTEEGLGFTGEKRGIKAIAAVTGLRPMP</sequence>
<reference key="1">
    <citation type="journal article" date="2004" name="Nat. Biotechnol.">
        <title>The genome sequence of the anaerobic, sulfate-reducing bacterium Desulfovibrio vulgaris Hildenborough.</title>
        <authorList>
            <person name="Heidelberg J.F."/>
            <person name="Seshadri R."/>
            <person name="Haveman S.A."/>
            <person name="Hemme C.L."/>
            <person name="Paulsen I.T."/>
            <person name="Kolonay J.F."/>
            <person name="Eisen J.A."/>
            <person name="Ward N.L."/>
            <person name="Methe B.A."/>
            <person name="Brinkac L.M."/>
            <person name="Daugherty S.C."/>
            <person name="DeBoy R.T."/>
            <person name="Dodson R.J."/>
            <person name="Durkin A.S."/>
            <person name="Madupu R."/>
            <person name="Nelson W.C."/>
            <person name="Sullivan S.A."/>
            <person name="Fouts D.E."/>
            <person name="Haft D.H."/>
            <person name="Selengut J."/>
            <person name="Peterson J.D."/>
            <person name="Davidsen T.M."/>
            <person name="Zafar N."/>
            <person name="Zhou L."/>
            <person name="Radune D."/>
            <person name="Dimitrov G."/>
            <person name="Hance M."/>
            <person name="Tran K."/>
            <person name="Khouri H.M."/>
            <person name="Gill J."/>
            <person name="Utterback T.R."/>
            <person name="Feldblyum T.V."/>
            <person name="Wall J.D."/>
            <person name="Voordouw G."/>
            <person name="Fraser C.M."/>
        </authorList>
    </citation>
    <scope>NUCLEOTIDE SEQUENCE [LARGE SCALE GENOMIC DNA]</scope>
    <source>
        <strain>ATCC 29579 / DSM 644 / CCUG 34227 / NCIMB 8303 / VKM B-1760 / Hildenborough</strain>
    </source>
</reference>
<feature type="chain" id="PRO_0000075666" description="Bifunctional enzyme IspD/IspF">
    <location>
        <begin position="1"/>
        <end position="395"/>
    </location>
</feature>
<feature type="region of interest" description="2-C-methyl-D-erythritol 4-phosphate cytidylyltransferase" evidence="1">
    <location>
        <begin position="1"/>
        <end position="237"/>
    </location>
</feature>
<feature type="region of interest" description="2-C-methyl-D-erythritol 2,4-cyclodiphosphate synthase" evidence="1">
    <location>
        <begin position="238"/>
        <end position="395"/>
    </location>
</feature>
<feature type="binding site" evidence="1">
    <location>
        <begin position="244"/>
        <end position="246"/>
    </location>
    <ligand>
        <name>4-CDP-2-C-methyl-D-erythritol 2-phosphate</name>
        <dbReference type="ChEBI" id="CHEBI:57919"/>
    </ligand>
</feature>
<feature type="binding site" evidence="1">
    <location>
        <position position="244"/>
    </location>
    <ligand>
        <name>a divalent metal cation</name>
        <dbReference type="ChEBI" id="CHEBI:60240"/>
    </ligand>
</feature>
<feature type="binding site" evidence="1">
    <location>
        <position position="246"/>
    </location>
    <ligand>
        <name>a divalent metal cation</name>
        <dbReference type="ChEBI" id="CHEBI:60240"/>
    </ligand>
</feature>
<feature type="binding site" evidence="1">
    <location>
        <begin position="270"/>
        <end position="271"/>
    </location>
    <ligand>
        <name>4-CDP-2-C-methyl-D-erythritol 2-phosphate</name>
        <dbReference type="ChEBI" id="CHEBI:57919"/>
    </ligand>
</feature>
<feature type="binding site" evidence="1">
    <location>
        <position position="278"/>
    </location>
    <ligand>
        <name>a divalent metal cation</name>
        <dbReference type="ChEBI" id="CHEBI:60240"/>
    </ligand>
</feature>
<feature type="binding site" evidence="1">
    <location>
        <begin position="292"/>
        <end position="294"/>
    </location>
    <ligand>
        <name>4-CDP-2-C-methyl-D-erythritol 2-phosphate</name>
        <dbReference type="ChEBI" id="CHEBI:57919"/>
    </ligand>
</feature>
<feature type="binding site" evidence="1">
    <location>
        <begin position="297"/>
        <end position="301"/>
    </location>
    <ligand>
        <name>4-CDP-2-C-methyl-D-erythritol 2-phosphate</name>
        <dbReference type="ChEBI" id="CHEBI:57919"/>
    </ligand>
</feature>
<feature type="binding site" evidence="1">
    <location>
        <begin position="368"/>
        <end position="371"/>
    </location>
    <ligand>
        <name>4-CDP-2-C-methyl-D-erythritol 2-phosphate</name>
        <dbReference type="ChEBI" id="CHEBI:57919"/>
    </ligand>
</feature>
<feature type="binding site" evidence="1">
    <location>
        <position position="375"/>
    </location>
    <ligand>
        <name>4-CDP-2-C-methyl-D-erythritol 2-phosphate</name>
        <dbReference type="ChEBI" id="CHEBI:57919"/>
    </ligand>
</feature>
<feature type="site" description="Transition state stabilizer" evidence="1">
    <location>
        <position position="15"/>
    </location>
</feature>
<feature type="site" description="Transition state stabilizer" evidence="1">
    <location>
        <position position="25"/>
    </location>
</feature>
<feature type="site" description="Positions MEP for the nucleophilic attack" evidence="1">
    <location>
        <position position="161"/>
    </location>
</feature>
<feature type="site" description="Positions MEP for the nucleophilic attack" evidence="1">
    <location>
        <position position="217"/>
    </location>
</feature>
<feature type="site" description="Transition state stabilizer" evidence="1">
    <location>
        <position position="270"/>
    </location>
</feature>
<feature type="site" description="Transition state stabilizer" evidence="1">
    <location>
        <position position="369"/>
    </location>
</feature>
<keyword id="KW-0414">Isoprene biosynthesis</keyword>
<keyword id="KW-0456">Lyase</keyword>
<keyword id="KW-0479">Metal-binding</keyword>
<keyword id="KW-0511">Multifunctional enzyme</keyword>
<keyword id="KW-0548">Nucleotidyltransferase</keyword>
<keyword id="KW-1185">Reference proteome</keyword>
<keyword id="KW-0808">Transferase</keyword>
<gene>
    <name evidence="1" type="primary">ispDF</name>
    <name type="synonym">ispD</name>
    <name type="ordered locus">DVU_1454</name>
</gene>
<organism>
    <name type="scientific">Nitratidesulfovibrio vulgaris (strain ATCC 29579 / DSM 644 / CCUG 34227 / NCIMB 8303 / VKM B-1760 / Hildenborough)</name>
    <name type="common">Desulfovibrio vulgaris</name>
    <dbReference type="NCBI Taxonomy" id="882"/>
    <lineage>
        <taxon>Bacteria</taxon>
        <taxon>Pseudomonadati</taxon>
        <taxon>Thermodesulfobacteriota</taxon>
        <taxon>Desulfovibrionia</taxon>
        <taxon>Desulfovibrionales</taxon>
        <taxon>Desulfovibrionaceae</taxon>
        <taxon>Nitratidesulfovibrio</taxon>
    </lineage>
</organism>
<evidence type="ECO:0000255" key="1">
    <source>
        <dbReference type="HAMAP-Rule" id="MF_01520"/>
    </source>
</evidence>
<comment type="function">
    <text evidence="1">Bifunctional enzyme that catalyzes the formation of 4-diphosphocytidyl-2-C-methyl-D-erythritol from CTP and 2-C-methyl-D-erythritol 4-phosphate (MEP) (IspD), and catalyzes the conversion of 4-diphosphocytidyl-2-C-methyl-D-erythritol 2-phosphate (CDP-ME2P) to 2-C-methyl-D-erythritol 2,4-cyclodiphosphate (ME-CPP) with a corresponding release of cytidine 5-monophosphate (CMP) (IspF).</text>
</comment>
<comment type="catalytic activity">
    <reaction evidence="1">
        <text>2-C-methyl-D-erythritol 4-phosphate + CTP + H(+) = 4-CDP-2-C-methyl-D-erythritol + diphosphate</text>
        <dbReference type="Rhea" id="RHEA:13429"/>
        <dbReference type="ChEBI" id="CHEBI:15378"/>
        <dbReference type="ChEBI" id="CHEBI:33019"/>
        <dbReference type="ChEBI" id="CHEBI:37563"/>
        <dbReference type="ChEBI" id="CHEBI:57823"/>
        <dbReference type="ChEBI" id="CHEBI:58262"/>
        <dbReference type="EC" id="2.7.7.60"/>
    </reaction>
</comment>
<comment type="catalytic activity">
    <reaction evidence="1">
        <text>4-CDP-2-C-methyl-D-erythritol 2-phosphate = 2-C-methyl-D-erythritol 2,4-cyclic diphosphate + CMP</text>
        <dbReference type="Rhea" id="RHEA:23864"/>
        <dbReference type="ChEBI" id="CHEBI:57919"/>
        <dbReference type="ChEBI" id="CHEBI:58483"/>
        <dbReference type="ChEBI" id="CHEBI:60377"/>
        <dbReference type="EC" id="4.6.1.12"/>
    </reaction>
</comment>
<comment type="cofactor">
    <cofactor evidence="1">
        <name>a divalent metal cation</name>
        <dbReference type="ChEBI" id="CHEBI:60240"/>
    </cofactor>
</comment>
<comment type="pathway">
    <text evidence="1">Isoprenoid biosynthesis; isopentenyl diphosphate biosynthesis via DXP pathway; isopentenyl diphosphate from 1-deoxy-D-xylulose 5-phosphate: step 2/6.</text>
</comment>
<comment type="pathway">
    <text evidence="1">Isoprenoid biosynthesis; isopentenyl diphosphate biosynthesis via DXP pathway; isopentenyl diphosphate from 1-deoxy-D-xylulose 5-phosphate: step 4/6.</text>
</comment>
<comment type="similarity">
    <text evidence="1">In the N-terminal section; belongs to the IspD/TarI cytidylyltransferase family. IspD subfamily.</text>
</comment>
<comment type="similarity">
    <text evidence="1">In the C-terminal section; belongs to the IspF family.</text>
</comment>
<proteinExistence type="inferred from homology"/>